<reference key="1">
    <citation type="journal article" date="1987" name="Jpn. J. Genet.">
        <title>The entire nucleotide sequence of baboon endogenous virus DNA: a chimeric genome structure of murine type C and simian type D retroviruses.</title>
        <authorList>
            <person name="Kato S."/>
            <person name="Matsuo K."/>
            <person name="Nishimura N."/>
            <person name="Takahashi N."/>
            <person name="Takano T."/>
        </authorList>
    </citation>
    <scope>NUCLEOTIDE SEQUENCE [GENOMIC DNA]</scope>
</reference>
<reference key="2">
    <citation type="journal article" date="2015" name="Virus Res.">
        <title>Suppression of production of baboon endogenous virus by dominant negative mutants of cellular factors involved in multivesicular body sorting pathway.</title>
        <authorList>
            <person name="Yoshikawa R."/>
            <person name="Miyaho R.N."/>
            <person name="Hashimoto A."/>
            <person name="Abe M."/>
            <person name="Yasuda J."/>
            <person name="Miyazawa T."/>
        </authorList>
    </citation>
    <scope>NUCLEOTIDE SEQUENCE [LARGE SCALE GENOMIC DNA]</scope>
</reference>
<keyword id="KW-0064">Aspartyl protease</keyword>
<keyword id="KW-0167">Capsid protein</keyword>
<keyword id="KW-0229">DNA integration</keyword>
<keyword id="KW-0233">DNA recombination</keyword>
<keyword id="KW-0238">DNA-binding</keyword>
<keyword id="KW-0239">DNA-directed DNA polymerase</keyword>
<keyword id="KW-0255">Endonuclease</keyword>
<keyword id="KW-1032">Host cell membrane</keyword>
<keyword id="KW-1035">Host cytoplasm</keyword>
<keyword id="KW-1039">Host endosome</keyword>
<keyword id="KW-1043">Host membrane</keyword>
<keyword id="KW-0945">Host-virus interaction</keyword>
<keyword id="KW-0378">Hydrolase</keyword>
<keyword id="KW-0449">Lipoprotein</keyword>
<keyword id="KW-0460">Magnesium</keyword>
<keyword id="KW-0472">Membrane</keyword>
<keyword id="KW-0479">Metal-binding</keyword>
<keyword id="KW-0511">Multifunctional enzyme</keyword>
<keyword id="KW-0519">Myristate</keyword>
<keyword id="KW-0540">Nuclease</keyword>
<keyword id="KW-0548">Nucleotidyltransferase</keyword>
<keyword id="KW-0597">Phosphoprotein</keyword>
<keyword id="KW-0645">Protease</keyword>
<keyword id="KW-1159">RNA suppression of termination</keyword>
<keyword id="KW-0694">RNA-binding</keyword>
<keyword id="KW-0695">RNA-directed DNA polymerase</keyword>
<keyword id="KW-0808">Transferase</keyword>
<keyword id="KW-1179">Viral genome integration</keyword>
<keyword id="KW-0468">Viral matrix protein</keyword>
<keyword id="KW-0543">Viral nucleoprotein</keyword>
<keyword id="KW-0946">Virion</keyword>
<keyword id="KW-1160">Virus entry into host cell</keyword>
<keyword id="KW-0862">Zinc</keyword>
<keyword id="KW-0863">Zinc-finger</keyword>
<organismHost>
    <name type="scientific">Papio</name>
    <name type="common">baboons</name>
    <dbReference type="NCBI Taxonomy" id="9554"/>
</organismHost>
<organismHost>
    <name type="scientific">Theropithecus gelada</name>
    <name type="common">Gelada baboon</name>
    <dbReference type="NCBI Taxonomy" id="9565"/>
</organismHost>
<sequence length="1727" mass="192980">MGQTLTTPLSLTLTHFSDVRARAHNLSVGVRKGRWQTFCSSEWPTLHVGWPRDGTFDLSVILQVKTKVMDPGPHGHPDQVAYIITWEDLVRNPPPWVKPFLHTPSTSKSTLLALEVPKNRTLDPPKPVLPDESQQDLLFQDPLPHPPHNPLLEPPPYNSPSPPVLSPVSPTTPSAPTPSSLVSSSTPPSSPAPPELTPRTPPQTPRLRLRRAEGQDGPSTWQSSLFPLRTVNRTIQYWPFSASDLYNWKTHNPSFSQDPQALTSLIESILLTHQPTWDDCQQLLQVLLTTEERQRVLLEARKNVPGPGGLPTQLPNEIDEGFPLTRPDWDYETAPGRESLRIYRQALLAGLKGAGKRPTNLAKVRTITQGKDESPAAFMERLLEGFRMYTPFDPEAPEHKATVAMSFIDQAALDIKGKLQRLDGIQTHGLQELVREAEKVYNKRETPEEREARLIKEQEEREDRRDRKRDKHLTKILAAVVTEKRAGKSGETRRRPKVDKDQCAYCKERGHWIKDCPKRPRDQKKPAPVLTLGEDSEQGCQGSGAPPEPRLTLSVGGHPTTFLVDTGAQHSVLTKANGPLSSRTSWVQGATGRKMHKWTNRRTVNLGQGMVTHSFLVVPECPYPLLGRDLLTKLGAQIHFSEAGAQVLDRDGQPIQILTVSLQDEHRLFDIPVTTSLPDVWLQDFPQAWAETGGLGRAKCQAPIIIDLKPTAVPVSIKQYPMSLEAHMGIRQHIIKFLELGVLRPCRSPWNTPLLPVKKPGTQDYRPVQDLREINKRTVDIHPTVPNPYNLLSTLKPDYSWYTVLDLKDAFFCLPLAPQSQELFAFEWKDPERGISGQLTWTRLPQGFKNSPTLFDEALHRDLTDFRTQHPEVTLLQYVDDLLLAAPTKKACTQGTRHLLQELGEKGYRASAKKAQICQTKVTYLGYILSEGKRWLTPGRIETVARIPPPRNPREVREFLGTAGFCRLWIPGFAELAAPLYALTKESTPFTWQTEHQLAFEALKKALLSAPALGLPDTSKPFTLFLDERQGIAKGVLTQKLGPWKRPVAYLSKKLDPVAAGWPPCLRIMAATAMLVKDSAKLTLGQPLTVITPHTLEAIVRQPPDRWITNARLTHYQALLLDTDRVQFGPPVTLNPATLLPVPENQPSPHDCRQVLAETHGTREDLKDQELPDADHTWYTDGSSYLDSGTRRAGAAVVDGHNTIWAQSLPPGTSAQKAELIALTKALELSKGKKANIYTDSRYAFATAHTHGSIYERRGLLTSEGKEIKNKAEIIALLKALFLPQEVAIIHCPGHQKGQDPVAVGNRQADRVARQAAMAEVLTLATEPDNTSHITIEHTYTSEDQEEARAIGATENKDTRNWEKEGKIVLPQKEALAMIQQMHAWTHLGNRKLKLLIEKTDFLIPRASTLIEQVTSACKVCQQVNAGATRVPAGKRTRGNRPGVYWEIDFTEVKPHYAGYKYLLVFVDTFSGWVEAFPTRQETAHIVAKKILEEIFPRFGLPKVIGSDNGPAFVSQVSQGLARILGINWKLHCAYRPQSSGQVERMNRTIKETLTKLTLETGLKDWRRLLSLALLRARNTPNRFGLTPYEILYGGPPPLSTLLNSFSPSNSKTDLQARLKGLQAVQAQIWAPLAELYRPGHSQTSHPFQVGDSVYVRRHRSQGLEPRWKGPYIVLLTTPTAIKVDGIATWIHASHAKAAPGTPGPTSSGTWRLRRSEDPLKIRLSRT</sequence>
<feature type="initiator methionine" description="Removed" evidence="6">
    <location>
        <position position="1"/>
    </location>
</feature>
<feature type="chain" id="PRO_0000259717" description="Gag-Pol polyprotein">
    <location>
        <begin position="2"/>
        <end position="1727"/>
    </location>
</feature>
<feature type="chain" id="PRO_0000442874" description="Matrix protein p15">
    <location>
        <begin position="2"/>
        <end position="129"/>
    </location>
</feature>
<feature type="chain" id="PRO_0000442875" description="RNA-binding phosphoprotein p12">
    <location>
        <begin position="130"/>
        <end position="226"/>
    </location>
</feature>
<feature type="chain" id="PRO_0000442876" description="Capsid protein p30">
    <location>
        <begin position="227"/>
        <end position="477"/>
    </location>
</feature>
<feature type="chain" id="PRO_0000442877" description="Nucleocapsid protein p10-Pol">
    <location>
        <begin position="478"/>
        <end position="533"/>
    </location>
</feature>
<feature type="chain" id="PRO_0000026123" description="Protease">
    <location>
        <begin position="534"/>
        <end position="658"/>
    </location>
</feature>
<feature type="chain" id="PRO_0000026124" description="Reverse transcriptase/ribonuclease H">
    <location>
        <begin position="659"/>
        <end position="1335"/>
    </location>
</feature>
<feature type="chain" id="PRO_0000026125" description="Integrase">
    <location>
        <begin position="1336"/>
        <end position="1727"/>
    </location>
</feature>
<feature type="domain" description="Peptidase A2" evidence="8">
    <location>
        <begin position="560"/>
        <end position="630"/>
    </location>
</feature>
<feature type="domain" description="Reverse transcriptase" evidence="9">
    <location>
        <begin position="736"/>
        <end position="929"/>
    </location>
</feature>
<feature type="domain" description="RNase H type-1" evidence="10">
    <location>
        <begin position="1172"/>
        <end position="1318"/>
    </location>
</feature>
<feature type="domain" description="Integrase catalytic" evidence="11">
    <location>
        <begin position="1438"/>
        <end position="1596"/>
    </location>
</feature>
<feature type="zinc finger region" description="CCHC-type" evidence="7">
    <location>
        <begin position="501"/>
        <end position="518"/>
    </location>
</feature>
<feature type="zinc finger region" description="HHCC-type" evidence="3">
    <location>
        <begin position="1383"/>
        <end position="1421"/>
    </location>
</feature>
<feature type="region of interest" description="Disordered" evidence="12">
    <location>
        <begin position="137"/>
        <end position="221"/>
    </location>
</feature>
<feature type="region of interest" description="Disordered" evidence="12">
    <location>
        <begin position="302"/>
        <end position="322"/>
    </location>
</feature>
<feature type="region of interest" description="Disordered" evidence="12">
    <location>
        <begin position="443"/>
        <end position="471"/>
    </location>
</feature>
<feature type="region of interest" description="Disordered" evidence="12">
    <location>
        <begin position="515"/>
        <end position="547"/>
    </location>
</feature>
<feature type="short sequence motif" description="PTAP/PSAP motif" evidence="1">
    <location>
        <begin position="109"/>
        <end position="112"/>
    </location>
</feature>
<feature type="short sequence motif" description="LYPX(n)L motif" evidence="1">
    <location>
        <begin position="128"/>
        <end position="132"/>
    </location>
</feature>
<feature type="short sequence motif" description="PPXY motif" evidence="1">
    <location>
        <begin position="154"/>
        <end position="157"/>
    </location>
</feature>
<feature type="compositionally biased region" description="Pro residues" evidence="12">
    <location>
        <begin position="143"/>
        <end position="165"/>
    </location>
</feature>
<feature type="compositionally biased region" description="Low complexity" evidence="12">
    <location>
        <begin position="166"/>
        <end position="187"/>
    </location>
</feature>
<feature type="compositionally biased region" description="Pro residues" evidence="12">
    <location>
        <begin position="188"/>
        <end position="204"/>
    </location>
</feature>
<feature type="compositionally biased region" description="Basic and acidic residues" evidence="12">
    <location>
        <begin position="443"/>
        <end position="465"/>
    </location>
</feature>
<feature type="compositionally biased region" description="Basic and acidic residues" evidence="12">
    <location>
        <begin position="515"/>
        <end position="525"/>
    </location>
</feature>
<feature type="active site" description="Protease; shared with dimeric partner" evidence="8">
    <location>
        <position position="565"/>
    </location>
</feature>
<feature type="binding site" evidence="9">
    <location>
        <position position="806"/>
    </location>
    <ligand>
        <name>Mg(2+)</name>
        <dbReference type="ChEBI" id="CHEBI:18420"/>
        <label>1</label>
        <note>catalytic; for reverse transcriptase activity</note>
    </ligand>
</feature>
<feature type="binding site" evidence="9">
    <location>
        <position position="880"/>
    </location>
    <ligand>
        <name>Mg(2+)</name>
        <dbReference type="ChEBI" id="CHEBI:18420"/>
        <label>1</label>
        <note>catalytic; for reverse transcriptase activity</note>
    </ligand>
</feature>
<feature type="binding site" evidence="9">
    <location>
        <position position="881"/>
    </location>
    <ligand>
        <name>Mg(2+)</name>
        <dbReference type="ChEBI" id="CHEBI:18420"/>
        <label>1</label>
        <note>catalytic; for reverse transcriptase activity</note>
    </ligand>
</feature>
<feature type="binding site" evidence="10">
    <location>
        <position position="1181"/>
    </location>
    <ligand>
        <name>Mg(2+)</name>
        <dbReference type="ChEBI" id="CHEBI:18420"/>
        <label>2</label>
        <note>catalytic; for RNase H activity</note>
    </ligand>
</feature>
<feature type="binding site" evidence="10">
    <location>
        <position position="1219"/>
    </location>
    <ligand>
        <name>Mg(2+)</name>
        <dbReference type="ChEBI" id="CHEBI:18420"/>
        <label>2</label>
        <note>catalytic; for RNase H activity</note>
    </ligand>
</feature>
<feature type="binding site" evidence="10">
    <location>
        <position position="1240"/>
    </location>
    <ligand>
        <name>Mg(2+)</name>
        <dbReference type="ChEBI" id="CHEBI:18420"/>
        <label>2</label>
        <note>catalytic; for RNase H activity</note>
    </ligand>
</feature>
<feature type="binding site" evidence="10">
    <location>
        <position position="1310"/>
    </location>
    <ligand>
        <name>Mg(2+)</name>
        <dbReference type="ChEBI" id="CHEBI:18420"/>
        <label>2</label>
        <note>catalytic; for RNase H activity</note>
    </ligand>
</feature>
<feature type="binding site" evidence="11">
    <location>
        <position position="1449"/>
    </location>
    <ligand>
        <name>Mg(2+)</name>
        <dbReference type="ChEBI" id="CHEBI:18420"/>
        <label>3</label>
        <note>catalytic; for integrase activity</note>
    </ligand>
</feature>
<feature type="binding site" evidence="11">
    <location>
        <position position="1508"/>
    </location>
    <ligand>
        <name>Mg(2+)</name>
        <dbReference type="ChEBI" id="CHEBI:18420"/>
        <label>3</label>
        <note>catalytic; for integrase activity</note>
    </ligand>
</feature>
<feature type="site" description="Cleavage; by viral protease" evidence="3">
    <location>
        <begin position="129"/>
        <end position="130"/>
    </location>
</feature>
<feature type="site" description="Cleavage; by viral protease" evidence="3">
    <location>
        <begin position="226"/>
        <end position="227"/>
    </location>
</feature>
<feature type="site" description="Cleavage; by viral protease" evidence="3">
    <location>
        <begin position="477"/>
        <end position="478"/>
    </location>
</feature>
<feature type="site" description="Cleavage; by viral protease" evidence="3">
    <location>
        <begin position="533"/>
        <end position="534"/>
    </location>
</feature>
<feature type="site" description="Cleavage; by viral protease" evidence="3">
    <location>
        <begin position="658"/>
        <end position="659"/>
    </location>
</feature>
<feature type="site" description="Cleavage; by viral protease" evidence="3">
    <location>
        <begin position="1335"/>
        <end position="1336"/>
    </location>
</feature>
<feature type="lipid moiety-binding region" description="N-myristoyl glycine; by host" evidence="6">
    <location>
        <position position="2"/>
    </location>
</feature>
<feature type="sequence conflict" description="In Ref. 2; BAP91048." evidence="13" ref="2">
    <original>P</original>
    <variation>S</variation>
    <location>
        <position position="125"/>
    </location>
</feature>
<feature type="sequence conflict" description="In Ref. 2; BAP91048." evidence="13" ref="2">
    <original>P</original>
    <variation>S</variation>
    <location>
        <position position="496"/>
    </location>
</feature>
<feature type="sequence conflict" description="In Ref. 2; BAP91048." evidence="13" ref="2">
    <original>K</original>
    <variation>N</variation>
    <location>
        <position position="500"/>
    </location>
</feature>
<accession>P10272</accession>
<accession>A0A0A8IBU6</accession>
<accession>Q9IRA3</accession>
<organism>
    <name type="scientific">Baboon endogenous virus (strain M7)</name>
    <dbReference type="NCBI Taxonomy" id="11764"/>
    <lineage>
        <taxon>Viruses</taxon>
        <taxon>Riboviria</taxon>
        <taxon>Pararnavirae</taxon>
        <taxon>Artverviricota</taxon>
        <taxon>Revtraviricetes</taxon>
        <taxon>Ortervirales</taxon>
        <taxon>Retroviridae</taxon>
        <taxon>Orthoretrovirinae</taxon>
        <taxon>Gammaretrovirus</taxon>
        <taxon>Baboon endogenous virus</taxon>
    </lineage>
</organism>
<name>POL_BAEVM</name>
<protein>
    <recommendedName>
        <fullName>Gag-Pol polyprotein</fullName>
    </recommendedName>
    <component>
        <recommendedName>
            <fullName>Matrix protein p15</fullName>
            <shortName>MA</shortName>
        </recommendedName>
    </component>
    <component>
        <recommendedName>
            <fullName>RNA-binding phosphoprotein p12</fullName>
        </recommendedName>
        <alternativeName>
            <fullName>pp12</fullName>
        </alternativeName>
    </component>
    <component>
        <recommendedName>
            <fullName>Capsid protein p30</fullName>
            <shortName>CA</shortName>
        </recommendedName>
    </component>
    <component>
        <recommendedName>
            <fullName>Nucleocapsid protein p10-Pol</fullName>
            <shortName>NC-pol</shortName>
        </recommendedName>
    </component>
    <component>
        <recommendedName>
            <fullName>Protease</fullName>
            <ecNumber>3.4.23.-</ecNumber>
        </recommendedName>
    </component>
    <component>
        <recommendedName>
            <fullName>Reverse transcriptase/ribonuclease H</fullName>
            <shortName>RT</shortName>
            <ecNumber evidence="9">2.7.7.49</ecNumber>
            <ecNumber evidence="9">2.7.7.7</ecNumber>
            <ecNumber evidence="10">3.1.26.4</ecNumber>
        </recommendedName>
    </component>
    <component>
        <recommendedName>
            <fullName>Integrase</fullName>
            <shortName>IN</shortName>
            <ecNumber evidence="5">2.7.7.-</ecNumber>
            <ecNumber evidence="5">3.1.-.-</ecNumber>
        </recommendedName>
    </component>
</protein>
<proteinExistence type="inferred from homology"/>
<evidence type="ECO:0000250" key="1">
    <source>
        <dbReference type="UniProtKB" id="P03332"/>
    </source>
</evidence>
<evidence type="ECO:0000250" key="2">
    <source>
        <dbReference type="UniProtKB" id="P03336"/>
    </source>
</evidence>
<evidence type="ECO:0000250" key="3">
    <source>
        <dbReference type="UniProtKB" id="P03355"/>
    </source>
</evidence>
<evidence type="ECO:0000250" key="4">
    <source>
        <dbReference type="UniProtKB" id="P26807"/>
    </source>
</evidence>
<evidence type="ECO:0000250" key="5">
    <source>
        <dbReference type="UniProtKB" id="Q04095"/>
    </source>
</evidence>
<evidence type="ECO:0000255" key="6"/>
<evidence type="ECO:0000255" key="7">
    <source>
        <dbReference type="PROSITE-ProRule" id="PRU00047"/>
    </source>
</evidence>
<evidence type="ECO:0000255" key="8">
    <source>
        <dbReference type="PROSITE-ProRule" id="PRU00275"/>
    </source>
</evidence>
<evidence type="ECO:0000255" key="9">
    <source>
        <dbReference type="PROSITE-ProRule" id="PRU00405"/>
    </source>
</evidence>
<evidence type="ECO:0000255" key="10">
    <source>
        <dbReference type="PROSITE-ProRule" id="PRU00408"/>
    </source>
</evidence>
<evidence type="ECO:0000255" key="11">
    <source>
        <dbReference type="PROSITE-ProRule" id="PRU00457"/>
    </source>
</evidence>
<evidence type="ECO:0000256" key="12">
    <source>
        <dbReference type="SAM" id="MobiDB-lite"/>
    </source>
</evidence>
<evidence type="ECO:0000305" key="13"/>
<comment type="function">
    <molecule>Gag-Pol polyprotein</molecule>
    <text evidence="1">Plays a role in budding and is processed by the viral protease during virion maturation outside the cell. During budding, it recruits, in a PPXY-dependent or independent manner, Nedd4-like ubiquitin ligases that conjugate ubiquitin molecules to Gag-Pol, or to Gag-Pol binding host factors. Interaction with HECT ubiquitin ligases probably links the viral protein to the host ESCRT pathway and facilitates release.</text>
</comment>
<comment type="function">
    <molecule>Matrix protein p15</molecule>
    <text evidence="1">Targets Gag and gag-pol polyproteins to the plasma membrane via a multipartite membrane binding signal, that includes its myristoylated N-terminus. Also mediates nuclear localization of the pre-integration complex.</text>
</comment>
<comment type="function">
    <molecule>RNA-binding phosphoprotein p12</molecule>
    <text evidence="3">Constituent of the pre-integration complex (PIC) which tethers the latter to mitotic chromosomes. This allows the integration of the viral genome into the host DNA.</text>
</comment>
<comment type="function">
    <molecule>Capsid protein p30</molecule>
    <text evidence="2">Forms the spherical core of the virion that encapsulates the genomic RNA-nucleocapsid complex.</text>
</comment>
<comment type="function">
    <molecule>Nucleocapsid protein p10-Pol</molecule>
    <text evidence="1 3">Involved in the packaging and encapsidation of two copies of the genome (By similarity). Binds with high affinity to conserved UCUG elements within the packaging signal, located near the 5'-end of the genome (By similarity). This binding is dependent on genome dimerization (By similarity). Acts as a nucleic acid chaperone which is involved in rearrangement of nucleic acid secondary structures during gRNA retrotranscription (By similarity).</text>
</comment>
<comment type="function">
    <molecule>Protease</molecule>
    <text evidence="8">The aspartyl protease mediates proteolytic cleavages of Gag and Gag-Pol polyproteins during or shortly after the release of the virion from the plasma membrane. Cleavages take place as an ordered, step-wise cascade to yield mature proteins. This process is called maturation. Displays maximal activity during the budding process just prior to particle release from the cell.</text>
</comment>
<comment type="function">
    <molecule>Reverse transcriptase/ribonuclease H</molecule>
    <text evidence="6">RT is a multifunctional enzyme that converts the viral dimeric RNA genome into dsDNA in the cytoplasm, shortly after virus entry into the cell. This enzyme displays a DNA polymerase activity that can copy either DNA or RNA templates, and a ribonuclease H (RNase H) activity that cleaves the RNA strand of RNA-DNA heteroduplexes in a partially processive 3' to 5' endonucleasic mode. Conversion of viral genomic RNA into dsDNA requires many steps. A tRNA binds to the primer-binding site (PBS) situated at the 5' end of the viral RNA. RT uses the 3' end of the tRNA primer to perform a short round of RNA-dependent minus-strand DNA synthesis. The reading proceeds through the U5 region and ends after the repeated (R) region which is present at both ends of viral RNA. The portion of the RNA-DNA heteroduplex is digested by the RNase H, resulting in a ssDNA product attached to the tRNA primer. This ssDNA/tRNA hybridizes with the identical R region situated at the 3' end of viral RNA. This template exchange, known as minus-strand DNA strong stop transfer, can be either intra- or intermolecular. RT uses the 3' end of this newly synthesized short ssDNA to perform the RNA-dependent minus-strand DNA synthesis of the whole template. RNase H digests the RNA template except for a polypurine tract (PPT) situated at the 5' end of the genome. It is not clear if both polymerase and RNase H activities are simultaneous. RNase H probably can proceed both in a polymerase-dependent (RNA cut into small fragments by the same RT performing DNA synthesis) and a polymerase-independent mode (cleavage of remaining RNA fragments by free RTs). Secondly, RT performs DNA-directed plus-strand DNA synthesis using the PPT that has not been removed by RNase H as primers. PPT and tRNA primers are then removed by RNase H. The 3' and 5' ssDNA PBS regions hybridize to form a circular dsDNA intermediate. Strand displacement synthesis by RT to the PBS and PPT ends produces a blunt ended, linear dsDNA copy of the viral genome that includes long terminal repeats (LTRs) at both ends.</text>
</comment>
<comment type="function">
    <molecule>Integrase</molecule>
    <text evidence="3">Catalyzes viral DNA integration into the host chromosome, by performing a series of DNA cutting and joining reactions. This enzyme activity takes place after virion entry into a cell and reverse transcription of the RNA genome in dsDNA. The first step in the integration process is 3' processing. This step requires a complex comprising the viral genome, matrix protein and integrase. This complex is called the pre-integration complex (PIC). The integrase protein removes 2 nucleotides from each 3' end of the viral DNA, leaving recessed CA OH's at the 3' ends. In the second step that requires cell division, the PIC enters cell nucleus. In the third step, termed strand transfer, the integrase protein joins the previously processed 3' ends to the 5' ends of strands of target cellular DNA at the site of integration. The last step is viral DNA integration into host chromosome.</text>
</comment>
<comment type="catalytic activity">
    <reaction evidence="9">
        <text>DNA(n) + a 2'-deoxyribonucleoside 5'-triphosphate = DNA(n+1) + diphosphate</text>
        <dbReference type="Rhea" id="RHEA:22508"/>
        <dbReference type="Rhea" id="RHEA-COMP:17339"/>
        <dbReference type="Rhea" id="RHEA-COMP:17340"/>
        <dbReference type="ChEBI" id="CHEBI:33019"/>
        <dbReference type="ChEBI" id="CHEBI:61560"/>
        <dbReference type="ChEBI" id="CHEBI:173112"/>
        <dbReference type="EC" id="2.7.7.49"/>
    </reaction>
</comment>
<comment type="catalytic activity">
    <reaction evidence="9">
        <text>DNA(n) + a 2'-deoxyribonucleoside 5'-triphosphate = DNA(n+1) + diphosphate</text>
        <dbReference type="Rhea" id="RHEA:22508"/>
        <dbReference type="Rhea" id="RHEA-COMP:17339"/>
        <dbReference type="Rhea" id="RHEA-COMP:17340"/>
        <dbReference type="ChEBI" id="CHEBI:33019"/>
        <dbReference type="ChEBI" id="CHEBI:61560"/>
        <dbReference type="ChEBI" id="CHEBI:173112"/>
        <dbReference type="EC" id="2.7.7.7"/>
    </reaction>
</comment>
<comment type="catalytic activity">
    <reaction evidence="10">
        <text>Endonucleolytic cleavage to 5'-phosphomonoester.</text>
        <dbReference type="EC" id="3.1.26.4"/>
    </reaction>
</comment>
<comment type="cofactor">
    <cofactor evidence="9">
        <name>Mg(2+)</name>
        <dbReference type="ChEBI" id="CHEBI:18420"/>
    </cofactor>
    <text evidence="9">The RT polymerase active site binds 2 magnesium ions.</text>
</comment>
<comment type="cofactor">
    <cofactor evidence="3">
        <name>Mg(2+)</name>
        <dbReference type="ChEBI" id="CHEBI:18420"/>
    </cofactor>
    <text evidence="3">Binds 1 magnesium ion for ribonuclease H (RNase H) activity.</text>
</comment>
<comment type="cofactor">
    <cofactor evidence="3">
        <name>Mg(2+)</name>
        <dbReference type="ChEBI" id="CHEBI:18420"/>
    </cofactor>
    <text evidence="3">Magnesium ions are required for integrase activity. Binds at least 1, maybe 2 magnesium ions.</text>
</comment>
<comment type="activity regulation">
    <molecule>Protease</molecule>
    <text evidence="3">Most efficiently inhibited by Amprenavir, which is able to block Gag-Pol processing in infected cells.</text>
</comment>
<comment type="subunit">
    <molecule>Capsid protein p30</molecule>
    <text evidence="3">Homohexamer; further associates as homomultimer (By similarity). The virus core is composed of a lattice formed from hexagonal rings, each containing six capsid monomers (By similarity).</text>
</comment>
<comment type="subunit">
    <molecule>Gag-Pol polyprotein</molecule>
    <text evidence="3">Interacts (via PPXY motif) with host NEDD4 (By similarity). Interacts (via PSAP motif) with host TSG101 (By similarity). Interacts (via LYPX(n)L motif) with host PDCD6IP (By similarity).</text>
</comment>
<comment type="subunit">
    <molecule>Reverse transcriptase/ribonuclease H</molecule>
    <text evidence="3">The reverse transcriptase is a monomer (Potential). Interacts (via RNase domains) with host release factor ETF1; this interaction is essential for translational readthrough of amber codon between viral gag and pol genes, as well as for viral replication (By similarity).</text>
</comment>
<comment type="subunit">
    <molecule>Integrase</molecule>
    <text evidence="3">Homodimer (By similarity).</text>
</comment>
<comment type="subcellular location">
    <molecule>Gag-Pol polyprotein</molecule>
    <subcellularLocation>
        <location evidence="1">Virion</location>
    </subcellularLocation>
    <subcellularLocation>
        <location evidence="1">Host cell membrane</location>
        <topology evidence="1">Lipid-anchor</topology>
    </subcellularLocation>
    <subcellularLocation>
        <location evidence="1">Host late endosome membrane</location>
        <topology evidence="1">Lipid-anchor</topology>
    </subcellularLocation>
    <subcellularLocation>
        <location evidence="4">Host endosome</location>
        <location evidence="4">Host multivesicular body</location>
    </subcellularLocation>
    <text evidence="3">These locations are probably linked to virus assembly sites.</text>
</comment>
<comment type="subcellular location">
    <molecule>Matrix protein p15</molecule>
    <subcellularLocation>
        <location evidence="3">Virion</location>
    </subcellularLocation>
</comment>
<comment type="subcellular location">
    <molecule>Capsid protein p30</molecule>
    <subcellularLocation>
        <location evidence="3">Virion</location>
    </subcellularLocation>
</comment>
<comment type="subcellular location">
    <molecule>Nucleocapsid protein p10-Pol</molecule>
    <subcellularLocation>
        <location evidence="3">Virion</location>
    </subcellularLocation>
</comment>
<comment type="subcellular location">
    <molecule>Protease</molecule>
    <subcellularLocation>
        <location evidence="3">Virion</location>
    </subcellularLocation>
</comment>
<comment type="subcellular location">
    <molecule>RNA-binding phosphoprotein p12</molecule>
    <subcellularLocation>
        <location evidence="3">Host cytoplasm</location>
    </subcellularLocation>
    <text evidence="3">Localizes to the host cytoplasm early in infection and binds to the mitotic chromosomes later on.</text>
</comment>
<comment type="domain">
    <molecule>Gag-Pol polyprotein</molecule>
    <text evidence="1">Late-budding domains (L domains) are short sequence motifs essential for viral particle release. They can occur individually or in close proximity within structural proteins. They interacts with sorting cellular proteins of the multivesicular body (MVB) pathway. Most of these proteins are class E vacuolar protein sorting factors belonging to ESCRT-I, ESCRT-II or ESCRT-III complexes. RNA-binding phosphoprotein p12 contains one L domain: a PPXY motif which potentially interacts with the WW domain 3 of NEDD4 E3 ubiquitin ligase. PPXY motif is essential for virus egress. Matrix protein p15 contains one L domain: a PTAP/PSAP motif, which potentially interacts with the UEV domain of TSG101. The junction between the matrix protein p15 and RNA-binding phosphoprotein p12 also contains one L domain: a LYPX(n)L motif which potentially interacts with PDCD6IP. Both PSAP and LYPX(n)L domains might play little to no role in budding and possibly drive residual virus release. contains.</text>
</comment>
<comment type="PTM">
    <molecule>Gag-Pol polyprotein</molecule>
    <text evidence="3">Specific enzymatic cleavages by the viral protease yield mature proteins. The protease is released by autocatalytic cleavage. The polyprotein is cleaved during and after budding, this process is termed maturation.</text>
</comment>
<comment type="PTM">
    <molecule>RNA-binding phosphoprotein p12</molecule>
    <text evidence="3">Phosphorylated on serine residues.</text>
</comment>
<comment type="miscellaneous">
    <molecule>Gag-Pol polyprotein</molecule>
    <text evidence="3">This protein is translated as a gag-pol fusion protein by episodic readthrough of the gag protein termination codon. Readthrough of the terminator codon TAG occurs between the codons for 537-Asp and 539-Gly.</text>
</comment>
<comment type="miscellaneous">
    <molecule>Nucleocapsid protein p10-Pol</molecule>
    <text evidence="3">Nucleocapsid protein p10-Pol released from Pol polyprotein (NC-pol) is a few amino acids shorter than the nucleocapsid protein p10 released from Gag polyprotein (NC-gag).</text>
</comment>
<comment type="miscellaneous">
    <molecule>Reverse transcriptase/ribonuclease H</molecule>
    <text evidence="9">The reverse transcriptase is an error-prone enzyme that lacks a proof-reading function. High mutations rate is a direct consequence of this characteristic. RT also displays frequent template switching leading to high recombination rate. Recombination mostly occurs between homologous regions of the two copackaged RNA genomes. If these two RNA molecules derive from different viral strains, reverse transcription will give rise to highly recombinated proviral DNAs.</text>
</comment>
<comment type="similarity">
    <text evidence="13">Belongs to the retroviral Pol polyprotein family.</text>
</comment>
<dbReference type="EC" id="3.4.23.-"/>
<dbReference type="EC" id="2.7.7.49" evidence="9"/>
<dbReference type="EC" id="2.7.7.7" evidence="9"/>
<dbReference type="EC" id="3.1.26.4" evidence="10"/>
<dbReference type="EC" id="2.7.7.-" evidence="5"/>
<dbReference type="EC" id="3.1.-.-" evidence="5"/>
<dbReference type="EMBL" id="D10032">
    <property type="protein sequence ID" value="BAA89659.1"/>
    <property type="molecule type" value="Genomic_DNA"/>
</dbReference>
<dbReference type="EMBL" id="AB979448">
    <property type="protein sequence ID" value="BAP91048.1"/>
    <property type="molecule type" value="Genomic_DNA"/>
</dbReference>
<dbReference type="PIR" id="JT0261">
    <property type="entry name" value="GNMVM7"/>
</dbReference>
<dbReference type="RefSeq" id="YP_009109689.1">
    <property type="nucleotide sequence ID" value="NC_022517.1"/>
</dbReference>
<dbReference type="SMR" id="P10272"/>
<dbReference type="KEGG" id="vg:22318531"/>
<dbReference type="Proteomes" id="UP000007443">
    <property type="component" value="Genome"/>
</dbReference>
<dbReference type="Proteomes" id="UP000097294">
    <property type="component" value="Genome"/>
</dbReference>
<dbReference type="GO" id="GO:0044185">
    <property type="term" value="C:host cell late endosome membrane"/>
    <property type="evidence" value="ECO:0007669"/>
    <property type="project" value="UniProtKB-SubCell"/>
</dbReference>
<dbReference type="GO" id="GO:0020002">
    <property type="term" value="C:host cell plasma membrane"/>
    <property type="evidence" value="ECO:0007669"/>
    <property type="project" value="UniProtKB-SubCell"/>
</dbReference>
<dbReference type="GO" id="GO:0072494">
    <property type="term" value="C:host multivesicular body"/>
    <property type="evidence" value="ECO:0007669"/>
    <property type="project" value="UniProtKB-SubCell"/>
</dbReference>
<dbReference type="GO" id="GO:0016020">
    <property type="term" value="C:membrane"/>
    <property type="evidence" value="ECO:0007669"/>
    <property type="project" value="UniProtKB-KW"/>
</dbReference>
<dbReference type="GO" id="GO:0019013">
    <property type="term" value="C:viral nucleocapsid"/>
    <property type="evidence" value="ECO:0007669"/>
    <property type="project" value="UniProtKB-KW"/>
</dbReference>
<dbReference type="GO" id="GO:0004190">
    <property type="term" value="F:aspartic-type endopeptidase activity"/>
    <property type="evidence" value="ECO:0007669"/>
    <property type="project" value="UniProtKB-KW"/>
</dbReference>
<dbReference type="GO" id="GO:0003677">
    <property type="term" value="F:DNA binding"/>
    <property type="evidence" value="ECO:0007669"/>
    <property type="project" value="UniProtKB-KW"/>
</dbReference>
<dbReference type="GO" id="GO:0003887">
    <property type="term" value="F:DNA-directed DNA polymerase activity"/>
    <property type="evidence" value="ECO:0007669"/>
    <property type="project" value="UniProtKB-KW"/>
</dbReference>
<dbReference type="GO" id="GO:0003723">
    <property type="term" value="F:RNA binding"/>
    <property type="evidence" value="ECO:0007669"/>
    <property type="project" value="UniProtKB-KW"/>
</dbReference>
<dbReference type="GO" id="GO:0003964">
    <property type="term" value="F:RNA-directed DNA polymerase activity"/>
    <property type="evidence" value="ECO:0007669"/>
    <property type="project" value="UniProtKB-KW"/>
</dbReference>
<dbReference type="GO" id="GO:0004523">
    <property type="term" value="F:RNA-DNA hybrid ribonuclease activity"/>
    <property type="evidence" value="ECO:0007669"/>
    <property type="project" value="UniProtKB-EC"/>
</dbReference>
<dbReference type="GO" id="GO:0039660">
    <property type="term" value="F:structural constituent of virion"/>
    <property type="evidence" value="ECO:0007669"/>
    <property type="project" value="UniProtKB-KW"/>
</dbReference>
<dbReference type="GO" id="GO:0008270">
    <property type="term" value="F:zinc ion binding"/>
    <property type="evidence" value="ECO:0007669"/>
    <property type="project" value="UniProtKB-KW"/>
</dbReference>
<dbReference type="GO" id="GO:0015074">
    <property type="term" value="P:DNA integration"/>
    <property type="evidence" value="ECO:0007669"/>
    <property type="project" value="UniProtKB-KW"/>
</dbReference>
<dbReference type="GO" id="GO:0006310">
    <property type="term" value="P:DNA recombination"/>
    <property type="evidence" value="ECO:0007669"/>
    <property type="project" value="UniProtKB-KW"/>
</dbReference>
<dbReference type="GO" id="GO:0075713">
    <property type="term" value="P:establishment of integrated proviral latency"/>
    <property type="evidence" value="ECO:0007669"/>
    <property type="project" value="UniProtKB-KW"/>
</dbReference>
<dbReference type="GO" id="GO:0006508">
    <property type="term" value="P:proteolysis"/>
    <property type="evidence" value="ECO:0007669"/>
    <property type="project" value="UniProtKB-KW"/>
</dbReference>
<dbReference type="GO" id="GO:0046718">
    <property type="term" value="P:symbiont entry into host cell"/>
    <property type="evidence" value="ECO:0007669"/>
    <property type="project" value="UniProtKB-KW"/>
</dbReference>
<dbReference type="GO" id="GO:0044826">
    <property type="term" value="P:viral genome integration into host DNA"/>
    <property type="evidence" value="ECO:0007669"/>
    <property type="project" value="UniProtKB-KW"/>
</dbReference>
<dbReference type="GO" id="GO:0019068">
    <property type="term" value="P:virion assembly"/>
    <property type="evidence" value="ECO:0007669"/>
    <property type="project" value="InterPro"/>
</dbReference>
<dbReference type="CDD" id="cd09273">
    <property type="entry name" value="RNase_HI_RT_Bel"/>
    <property type="match status" value="1"/>
</dbReference>
<dbReference type="CDD" id="cd06095">
    <property type="entry name" value="RP_RTVL_H_like"/>
    <property type="match status" value="1"/>
</dbReference>
<dbReference type="CDD" id="cd03715">
    <property type="entry name" value="RT_ZFREV_like"/>
    <property type="match status" value="1"/>
</dbReference>
<dbReference type="FunFam" id="3.30.70.270:FF:000020">
    <property type="entry name" value="Transposon Tf2-6 polyprotein-like Protein"/>
    <property type="match status" value="1"/>
</dbReference>
<dbReference type="Gene3D" id="1.10.340.70">
    <property type="match status" value="1"/>
</dbReference>
<dbReference type="Gene3D" id="2.30.30.850">
    <property type="match status" value="1"/>
</dbReference>
<dbReference type="Gene3D" id="3.10.20.370">
    <property type="match status" value="1"/>
</dbReference>
<dbReference type="Gene3D" id="3.30.70.270">
    <property type="match status" value="2"/>
</dbReference>
<dbReference type="Gene3D" id="2.40.70.10">
    <property type="entry name" value="Acid Proteases"/>
    <property type="match status" value="1"/>
</dbReference>
<dbReference type="Gene3D" id="1.10.150.180">
    <property type="entry name" value="Gamma-retroviral matrix domain"/>
    <property type="match status" value="1"/>
</dbReference>
<dbReference type="Gene3D" id="3.10.10.10">
    <property type="entry name" value="HIV Type 1 Reverse Transcriptase, subunit A, domain 1"/>
    <property type="match status" value="1"/>
</dbReference>
<dbReference type="Gene3D" id="1.10.375.10">
    <property type="entry name" value="Human Immunodeficiency Virus Type 1 Capsid Protein"/>
    <property type="match status" value="1"/>
</dbReference>
<dbReference type="Gene3D" id="3.30.420.10">
    <property type="entry name" value="Ribonuclease H-like superfamily/Ribonuclease H"/>
    <property type="match status" value="2"/>
</dbReference>
<dbReference type="Gene3D" id="4.10.60.10">
    <property type="entry name" value="Zinc finger, CCHC-type"/>
    <property type="match status" value="1"/>
</dbReference>
<dbReference type="InterPro" id="IPR001969">
    <property type="entry name" value="Aspartic_peptidase_AS"/>
</dbReference>
<dbReference type="InterPro" id="IPR043502">
    <property type="entry name" value="DNA/RNA_pol_sf"/>
</dbReference>
<dbReference type="InterPro" id="IPR000840">
    <property type="entry name" value="G_retro_matrix"/>
</dbReference>
<dbReference type="InterPro" id="IPR036946">
    <property type="entry name" value="G_retro_matrix_sf"/>
</dbReference>
<dbReference type="InterPro" id="IPR003036">
    <property type="entry name" value="Gag_P30"/>
</dbReference>
<dbReference type="InterPro" id="IPR001584">
    <property type="entry name" value="Integrase_cat-core"/>
</dbReference>
<dbReference type="InterPro" id="IPR040643">
    <property type="entry name" value="MLVIN_C"/>
</dbReference>
<dbReference type="InterPro" id="IPR001995">
    <property type="entry name" value="Peptidase_A2_cat"/>
</dbReference>
<dbReference type="InterPro" id="IPR021109">
    <property type="entry name" value="Peptidase_aspartic_dom_sf"/>
</dbReference>
<dbReference type="InterPro" id="IPR018061">
    <property type="entry name" value="Retropepsins"/>
</dbReference>
<dbReference type="InterPro" id="IPR008919">
    <property type="entry name" value="Retrov_capsid_N"/>
</dbReference>
<dbReference type="InterPro" id="IPR050462">
    <property type="entry name" value="Retroviral_Gag-Pol_poly"/>
</dbReference>
<dbReference type="InterPro" id="IPR010999">
    <property type="entry name" value="Retrovr_matrix"/>
</dbReference>
<dbReference type="InterPro" id="IPR043128">
    <property type="entry name" value="Rev_trsase/Diguanyl_cyclase"/>
</dbReference>
<dbReference type="InterPro" id="IPR012337">
    <property type="entry name" value="RNaseH-like_sf"/>
</dbReference>
<dbReference type="InterPro" id="IPR002156">
    <property type="entry name" value="RNaseH_domain"/>
</dbReference>
<dbReference type="InterPro" id="IPR036397">
    <property type="entry name" value="RNaseH_sf"/>
</dbReference>
<dbReference type="InterPro" id="IPR000477">
    <property type="entry name" value="RT_dom"/>
</dbReference>
<dbReference type="InterPro" id="IPR041577">
    <property type="entry name" value="RT_RNaseH_2"/>
</dbReference>
<dbReference type="InterPro" id="IPR001878">
    <property type="entry name" value="Znf_CCHC"/>
</dbReference>
<dbReference type="InterPro" id="IPR036875">
    <property type="entry name" value="Znf_CCHC_sf"/>
</dbReference>
<dbReference type="InterPro" id="IPR015416">
    <property type="entry name" value="Znf_H2C2_histone_UAS-bd"/>
</dbReference>
<dbReference type="PANTHER" id="PTHR33166">
    <property type="entry name" value="GAG_P30 DOMAIN-CONTAINING PROTEIN"/>
    <property type="match status" value="1"/>
</dbReference>
<dbReference type="Pfam" id="PF01140">
    <property type="entry name" value="Gag_MA"/>
    <property type="match status" value="1"/>
</dbReference>
<dbReference type="Pfam" id="PF02093">
    <property type="entry name" value="Gag_p30"/>
    <property type="match status" value="1"/>
</dbReference>
<dbReference type="Pfam" id="PF18697">
    <property type="entry name" value="MLVIN_C"/>
    <property type="match status" value="1"/>
</dbReference>
<dbReference type="Pfam" id="PF00075">
    <property type="entry name" value="RNase_H"/>
    <property type="match status" value="1"/>
</dbReference>
<dbReference type="Pfam" id="PF17919">
    <property type="entry name" value="RT_RNaseH_2"/>
    <property type="match status" value="1"/>
</dbReference>
<dbReference type="Pfam" id="PF00665">
    <property type="entry name" value="rve"/>
    <property type="match status" value="1"/>
</dbReference>
<dbReference type="Pfam" id="PF00077">
    <property type="entry name" value="RVP"/>
    <property type="match status" value="1"/>
</dbReference>
<dbReference type="Pfam" id="PF00078">
    <property type="entry name" value="RVT_1"/>
    <property type="match status" value="1"/>
</dbReference>
<dbReference type="Pfam" id="PF09337">
    <property type="entry name" value="zf-H2C2"/>
    <property type="match status" value="1"/>
</dbReference>
<dbReference type="SMART" id="SM00343">
    <property type="entry name" value="ZnF_C2HC"/>
    <property type="match status" value="1"/>
</dbReference>
<dbReference type="SUPFAM" id="SSF50630">
    <property type="entry name" value="Acid proteases"/>
    <property type="match status" value="1"/>
</dbReference>
<dbReference type="SUPFAM" id="SSF56672">
    <property type="entry name" value="DNA/RNA polymerases"/>
    <property type="match status" value="1"/>
</dbReference>
<dbReference type="SUPFAM" id="SSF47836">
    <property type="entry name" value="Retroviral matrix proteins"/>
    <property type="match status" value="1"/>
</dbReference>
<dbReference type="SUPFAM" id="SSF47943">
    <property type="entry name" value="Retrovirus capsid protein, N-terminal core domain"/>
    <property type="match status" value="1"/>
</dbReference>
<dbReference type="SUPFAM" id="SSF57756">
    <property type="entry name" value="Retrovirus zinc finger-like domains"/>
    <property type="match status" value="1"/>
</dbReference>
<dbReference type="SUPFAM" id="SSF53098">
    <property type="entry name" value="Ribonuclease H-like"/>
    <property type="match status" value="2"/>
</dbReference>
<dbReference type="PROSITE" id="PS50175">
    <property type="entry name" value="ASP_PROT_RETROV"/>
    <property type="match status" value="1"/>
</dbReference>
<dbReference type="PROSITE" id="PS00141">
    <property type="entry name" value="ASP_PROTEASE"/>
    <property type="match status" value="1"/>
</dbReference>
<dbReference type="PROSITE" id="PS50994">
    <property type="entry name" value="INTEGRASE"/>
    <property type="match status" value="1"/>
</dbReference>
<dbReference type="PROSITE" id="PS50879">
    <property type="entry name" value="RNASE_H_1"/>
    <property type="match status" value="1"/>
</dbReference>
<dbReference type="PROSITE" id="PS50878">
    <property type="entry name" value="RT_POL"/>
    <property type="match status" value="1"/>
</dbReference>
<dbReference type="PROSITE" id="PS50158">
    <property type="entry name" value="ZF_CCHC"/>
    <property type="match status" value="1"/>
</dbReference>
<gene>
    <name type="primary">pol</name>
</gene>